<comment type="similarity">
    <text evidence="1">Belongs to the universal ribosomal protein uS2 family.</text>
</comment>
<proteinExistence type="inferred from homology"/>
<feature type="chain" id="PRO_0000352077" description="Small ribosomal subunit protein uS2">
    <location>
        <begin position="1"/>
        <end position="208"/>
    </location>
</feature>
<feature type="region of interest" description="Disordered" evidence="2">
    <location>
        <begin position="189"/>
        <end position="208"/>
    </location>
</feature>
<organism>
    <name type="scientific">Pyrobaculum arsenaticum (strain DSM 13514 / JCM 11321 / PZ6)</name>
    <dbReference type="NCBI Taxonomy" id="340102"/>
    <lineage>
        <taxon>Archaea</taxon>
        <taxon>Thermoproteota</taxon>
        <taxon>Thermoprotei</taxon>
        <taxon>Thermoproteales</taxon>
        <taxon>Thermoproteaceae</taxon>
        <taxon>Pyrobaculum</taxon>
    </lineage>
</organism>
<protein>
    <recommendedName>
        <fullName evidence="1">Small ribosomal subunit protein uS2</fullName>
    </recommendedName>
    <alternativeName>
        <fullName evidence="3">30S ribosomal protein S2</fullName>
    </alternativeName>
</protein>
<accession>A4WH11</accession>
<sequence>MSEEMQYEYLVPLEKYLSAGVRLGTRLSNKYLEDRGFIFAVRPDGLRIFDIKKIDERLKIAARFIARYPPDRVLVHTTRPYGFKPVQMFCKYVGCKALTGRFIPGTLTNPNLPHYQEADLLFVVDPKLDAQAVAEAAKMGVPVIALVDTDTPHQYIDFMIPCNNKGRKSLALIFWILARQVLRERGELKPDQDLPVPPEEFETRLVQT</sequence>
<keyword id="KW-0687">Ribonucleoprotein</keyword>
<keyword id="KW-0689">Ribosomal protein</keyword>
<gene>
    <name evidence="1" type="primary">rps2</name>
    <name type="ordered locus">Pars_0061</name>
</gene>
<dbReference type="EMBL" id="CP000660">
    <property type="protein sequence ID" value="ABP49678.1"/>
    <property type="molecule type" value="Genomic_DNA"/>
</dbReference>
<dbReference type="SMR" id="A4WH11"/>
<dbReference type="STRING" id="340102.Pars_0061"/>
<dbReference type="KEGG" id="pas:Pars_0061"/>
<dbReference type="HOGENOM" id="CLU_058171_3_0_2"/>
<dbReference type="OrthoDB" id="371797at2157"/>
<dbReference type="PhylomeDB" id="A4WH11"/>
<dbReference type="Proteomes" id="UP000001567">
    <property type="component" value="Chromosome"/>
</dbReference>
<dbReference type="GO" id="GO:0015935">
    <property type="term" value="C:small ribosomal subunit"/>
    <property type="evidence" value="ECO:0007669"/>
    <property type="project" value="InterPro"/>
</dbReference>
<dbReference type="GO" id="GO:0003735">
    <property type="term" value="F:structural constituent of ribosome"/>
    <property type="evidence" value="ECO:0007669"/>
    <property type="project" value="InterPro"/>
</dbReference>
<dbReference type="GO" id="GO:0006412">
    <property type="term" value="P:translation"/>
    <property type="evidence" value="ECO:0007669"/>
    <property type="project" value="UniProtKB-UniRule"/>
</dbReference>
<dbReference type="CDD" id="cd01425">
    <property type="entry name" value="RPS2"/>
    <property type="match status" value="1"/>
</dbReference>
<dbReference type="FunFam" id="3.40.50.10490:FF:000030">
    <property type="entry name" value="30S ribosomal protein S2"/>
    <property type="match status" value="1"/>
</dbReference>
<dbReference type="Gene3D" id="3.40.50.10490">
    <property type="entry name" value="Glucose-6-phosphate isomerase like protein, domain 1"/>
    <property type="match status" value="1"/>
</dbReference>
<dbReference type="HAMAP" id="MF_00291_A">
    <property type="entry name" value="Ribosomal_uS2_A"/>
    <property type="match status" value="1"/>
</dbReference>
<dbReference type="InterPro" id="IPR001865">
    <property type="entry name" value="Ribosomal_uS2"/>
</dbReference>
<dbReference type="InterPro" id="IPR023454">
    <property type="entry name" value="Ribosomal_uS2_arc"/>
</dbReference>
<dbReference type="InterPro" id="IPR005707">
    <property type="entry name" value="Ribosomal_uS2_euk/arc"/>
</dbReference>
<dbReference type="InterPro" id="IPR023591">
    <property type="entry name" value="Ribosomal_uS2_flav_dom_sf"/>
</dbReference>
<dbReference type="NCBIfam" id="TIGR01012">
    <property type="entry name" value="uS2_euk_arch"/>
    <property type="match status" value="1"/>
</dbReference>
<dbReference type="PANTHER" id="PTHR11489">
    <property type="entry name" value="40S RIBOSOMAL PROTEIN SA"/>
    <property type="match status" value="1"/>
</dbReference>
<dbReference type="Pfam" id="PF00318">
    <property type="entry name" value="Ribosomal_S2"/>
    <property type="match status" value="1"/>
</dbReference>
<dbReference type="PRINTS" id="PR00395">
    <property type="entry name" value="RIBOSOMALS2"/>
</dbReference>
<dbReference type="SUPFAM" id="SSF52313">
    <property type="entry name" value="Ribosomal protein S2"/>
    <property type="match status" value="1"/>
</dbReference>
<name>RS2_PYRAR</name>
<reference key="1">
    <citation type="submission" date="2007-04" db="EMBL/GenBank/DDBJ databases">
        <title>Complete sequence of Pyrobaculum arsenaticum DSM 13514.</title>
        <authorList>
            <consortium name="US DOE Joint Genome Institute"/>
            <person name="Copeland A."/>
            <person name="Lucas S."/>
            <person name="Lapidus A."/>
            <person name="Barry K."/>
            <person name="Glavina del Rio T."/>
            <person name="Dalin E."/>
            <person name="Tice H."/>
            <person name="Pitluck S."/>
            <person name="Chain P."/>
            <person name="Malfatti S."/>
            <person name="Shin M."/>
            <person name="Vergez L."/>
            <person name="Schmutz J."/>
            <person name="Larimer F."/>
            <person name="Land M."/>
            <person name="Hauser L."/>
            <person name="Kyrpides N."/>
            <person name="Mikhailova N."/>
            <person name="Cozen A.E."/>
            <person name="Fitz-Gibbon S.T."/>
            <person name="House C.H."/>
            <person name="Saltikov C."/>
            <person name="Lowe T.M."/>
            <person name="Richardson P."/>
        </authorList>
    </citation>
    <scope>NUCLEOTIDE SEQUENCE [LARGE SCALE GENOMIC DNA]</scope>
    <source>
        <strain>ATCC 700994 / DSM 13514 / JCM 11321 / PZ6</strain>
    </source>
</reference>
<evidence type="ECO:0000255" key="1">
    <source>
        <dbReference type="HAMAP-Rule" id="MF_00291"/>
    </source>
</evidence>
<evidence type="ECO:0000256" key="2">
    <source>
        <dbReference type="SAM" id="MobiDB-lite"/>
    </source>
</evidence>
<evidence type="ECO:0000305" key="3"/>